<name>RS18_CLONN</name>
<sequence length="78" mass="8948">MALNKKGAKRRRKKVCAFCADKSSSIDYKDVNKLRKYVTERGKILPRRISGNCAKHQRELTLAIKRARNVALLPFTTD</sequence>
<evidence type="ECO:0000255" key="1">
    <source>
        <dbReference type="HAMAP-Rule" id="MF_00270"/>
    </source>
</evidence>
<evidence type="ECO:0000305" key="2"/>
<gene>
    <name evidence="1" type="primary">rpsR</name>
    <name type="ordered locus">NT01CX_0885</name>
</gene>
<feature type="chain" id="PRO_1000003486" description="Small ribosomal subunit protein bS18">
    <location>
        <begin position="1"/>
        <end position="78"/>
    </location>
</feature>
<comment type="function">
    <text evidence="1">Binds as a heterodimer with protein bS6 to the central domain of the 16S rRNA, where it helps stabilize the platform of the 30S subunit.</text>
</comment>
<comment type="subunit">
    <text evidence="1">Part of the 30S ribosomal subunit. Forms a tight heterodimer with protein bS6.</text>
</comment>
<comment type="similarity">
    <text evidence="1">Belongs to the bacterial ribosomal protein bS18 family.</text>
</comment>
<reference key="1">
    <citation type="journal article" date="2006" name="Nat. Biotechnol.">
        <title>The genome and transcriptomes of the anti-tumor agent Clostridium novyi-NT.</title>
        <authorList>
            <person name="Bettegowda C."/>
            <person name="Huang X."/>
            <person name="Lin J."/>
            <person name="Cheong I."/>
            <person name="Kohli M."/>
            <person name="Szabo S.A."/>
            <person name="Zhang X."/>
            <person name="Diaz L.A. Jr."/>
            <person name="Velculescu V.E."/>
            <person name="Parmigiani G."/>
            <person name="Kinzler K.W."/>
            <person name="Vogelstein B."/>
            <person name="Zhou S."/>
        </authorList>
    </citation>
    <scope>NUCLEOTIDE SEQUENCE [LARGE SCALE GENOMIC DNA]</scope>
    <source>
        <strain>NT</strain>
    </source>
</reference>
<dbReference type="EMBL" id="CP000382">
    <property type="protein sequence ID" value="ABK61688.1"/>
    <property type="molecule type" value="Genomic_DNA"/>
</dbReference>
<dbReference type="RefSeq" id="WP_011721012.1">
    <property type="nucleotide sequence ID" value="NC_008593.1"/>
</dbReference>
<dbReference type="SMR" id="A0PX89"/>
<dbReference type="STRING" id="386415.NT01CX_0885"/>
<dbReference type="KEGG" id="cno:NT01CX_0885"/>
<dbReference type="eggNOG" id="COG0238">
    <property type="taxonomic scope" value="Bacteria"/>
</dbReference>
<dbReference type="HOGENOM" id="CLU_148710_2_2_9"/>
<dbReference type="Proteomes" id="UP000008220">
    <property type="component" value="Chromosome"/>
</dbReference>
<dbReference type="GO" id="GO:0022627">
    <property type="term" value="C:cytosolic small ribosomal subunit"/>
    <property type="evidence" value="ECO:0007669"/>
    <property type="project" value="TreeGrafter"/>
</dbReference>
<dbReference type="GO" id="GO:0070181">
    <property type="term" value="F:small ribosomal subunit rRNA binding"/>
    <property type="evidence" value="ECO:0007669"/>
    <property type="project" value="TreeGrafter"/>
</dbReference>
<dbReference type="GO" id="GO:0003735">
    <property type="term" value="F:structural constituent of ribosome"/>
    <property type="evidence" value="ECO:0007669"/>
    <property type="project" value="InterPro"/>
</dbReference>
<dbReference type="GO" id="GO:0006412">
    <property type="term" value="P:translation"/>
    <property type="evidence" value="ECO:0007669"/>
    <property type="project" value="UniProtKB-UniRule"/>
</dbReference>
<dbReference type="FunFam" id="4.10.640.10:FF:000004">
    <property type="entry name" value="30S ribosomal protein S18"/>
    <property type="match status" value="1"/>
</dbReference>
<dbReference type="Gene3D" id="4.10.640.10">
    <property type="entry name" value="Ribosomal protein S18"/>
    <property type="match status" value="1"/>
</dbReference>
<dbReference type="HAMAP" id="MF_00270">
    <property type="entry name" value="Ribosomal_bS18"/>
    <property type="match status" value="1"/>
</dbReference>
<dbReference type="InterPro" id="IPR001648">
    <property type="entry name" value="Ribosomal_bS18"/>
</dbReference>
<dbReference type="InterPro" id="IPR018275">
    <property type="entry name" value="Ribosomal_bS18_CS"/>
</dbReference>
<dbReference type="InterPro" id="IPR036870">
    <property type="entry name" value="Ribosomal_bS18_sf"/>
</dbReference>
<dbReference type="NCBIfam" id="TIGR00165">
    <property type="entry name" value="S18"/>
    <property type="match status" value="1"/>
</dbReference>
<dbReference type="PANTHER" id="PTHR13479">
    <property type="entry name" value="30S RIBOSOMAL PROTEIN S18"/>
    <property type="match status" value="1"/>
</dbReference>
<dbReference type="PANTHER" id="PTHR13479:SF40">
    <property type="entry name" value="SMALL RIBOSOMAL SUBUNIT PROTEIN BS18M"/>
    <property type="match status" value="1"/>
</dbReference>
<dbReference type="Pfam" id="PF01084">
    <property type="entry name" value="Ribosomal_S18"/>
    <property type="match status" value="1"/>
</dbReference>
<dbReference type="PRINTS" id="PR00974">
    <property type="entry name" value="RIBOSOMALS18"/>
</dbReference>
<dbReference type="SUPFAM" id="SSF46911">
    <property type="entry name" value="Ribosomal protein S18"/>
    <property type="match status" value="1"/>
</dbReference>
<dbReference type="PROSITE" id="PS00057">
    <property type="entry name" value="RIBOSOMAL_S18"/>
    <property type="match status" value="1"/>
</dbReference>
<keyword id="KW-1185">Reference proteome</keyword>
<keyword id="KW-0687">Ribonucleoprotein</keyword>
<keyword id="KW-0689">Ribosomal protein</keyword>
<keyword id="KW-0694">RNA-binding</keyword>
<keyword id="KW-0699">rRNA-binding</keyword>
<accession>A0PX89</accession>
<protein>
    <recommendedName>
        <fullName evidence="1">Small ribosomal subunit protein bS18</fullName>
    </recommendedName>
    <alternativeName>
        <fullName evidence="2">30S ribosomal protein S18</fullName>
    </alternativeName>
</protein>
<organism>
    <name type="scientific">Clostridium novyi (strain NT)</name>
    <dbReference type="NCBI Taxonomy" id="386415"/>
    <lineage>
        <taxon>Bacteria</taxon>
        <taxon>Bacillati</taxon>
        <taxon>Bacillota</taxon>
        <taxon>Clostridia</taxon>
        <taxon>Eubacteriales</taxon>
        <taxon>Clostridiaceae</taxon>
        <taxon>Clostridium</taxon>
    </lineage>
</organism>
<proteinExistence type="inferred from homology"/>